<dbReference type="EC" id="3.1.1.106" evidence="1"/>
<dbReference type="EMBL" id="FN543093">
    <property type="protein sequence ID" value="CBA29859.1"/>
    <property type="molecule type" value="Genomic_DNA"/>
</dbReference>
<dbReference type="SMR" id="C9Y0V8"/>
<dbReference type="KEGG" id="ctu:CTU_16240"/>
<dbReference type="PATRIC" id="fig|693216.3.peg.1547"/>
<dbReference type="HOGENOM" id="CLU_046550_5_1_6"/>
<dbReference type="Proteomes" id="UP000002069">
    <property type="component" value="Chromosome"/>
</dbReference>
<dbReference type="GO" id="GO:0061463">
    <property type="term" value="F:O-acetyl-ADP-ribose deacetylase activity"/>
    <property type="evidence" value="ECO:0007669"/>
    <property type="project" value="UniProtKB-EC"/>
</dbReference>
<dbReference type="GO" id="GO:0001883">
    <property type="term" value="F:purine nucleoside binding"/>
    <property type="evidence" value="ECO:0007669"/>
    <property type="project" value="UniProtKB-UniRule"/>
</dbReference>
<dbReference type="GO" id="GO:0008428">
    <property type="term" value="F:ribonuclease inhibitor activity"/>
    <property type="evidence" value="ECO:0007669"/>
    <property type="project" value="UniProtKB-UniRule"/>
</dbReference>
<dbReference type="GO" id="GO:0042278">
    <property type="term" value="P:purine nucleoside metabolic process"/>
    <property type="evidence" value="ECO:0007669"/>
    <property type="project" value="UniProtKB-UniRule"/>
</dbReference>
<dbReference type="CDD" id="cd02908">
    <property type="entry name" value="Macro_OAADPr_deacetylase"/>
    <property type="match status" value="1"/>
</dbReference>
<dbReference type="Gene3D" id="3.40.220.10">
    <property type="entry name" value="Leucine Aminopeptidase, subunit E, domain 1"/>
    <property type="match status" value="1"/>
</dbReference>
<dbReference type="HAMAP" id="MF_01205">
    <property type="entry name" value="YmdB"/>
    <property type="match status" value="1"/>
</dbReference>
<dbReference type="InterPro" id="IPR002589">
    <property type="entry name" value="Macro_dom"/>
</dbReference>
<dbReference type="InterPro" id="IPR043472">
    <property type="entry name" value="Macro_dom-like"/>
</dbReference>
<dbReference type="InterPro" id="IPR024900">
    <property type="entry name" value="O-Ac-ADP-ribose_deAcase"/>
</dbReference>
<dbReference type="NCBIfam" id="NF001660">
    <property type="entry name" value="PRK00431.1-1"/>
    <property type="match status" value="1"/>
</dbReference>
<dbReference type="NCBIfam" id="NF001664">
    <property type="entry name" value="PRK00431.1-6"/>
    <property type="match status" value="1"/>
</dbReference>
<dbReference type="PANTHER" id="PTHR11106">
    <property type="entry name" value="GANGLIOSIDE INDUCED DIFFERENTIATION ASSOCIATED PROTEIN 2-RELATED"/>
    <property type="match status" value="1"/>
</dbReference>
<dbReference type="PANTHER" id="PTHR11106:SF27">
    <property type="entry name" value="MACRO DOMAIN-CONTAINING PROTEIN"/>
    <property type="match status" value="1"/>
</dbReference>
<dbReference type="Pfam" id="PF01661">
    <property type="entry name" value="Macro"/>
    <property type="match status" value="1"/>
</dbReference>
<dbReference type="SMART" id="SM00506">
    <property type="entry name" value="A1pp"/>
    <property type="match status" value="1"/>
</dbReference>
<dbReference type="SUPFAM" id="SSF52949">
    <property type="entry name" value="Macro domain-like"/>
    <property type="match status" value="1"/>
</dbReference>
<dbReference type="PROSITE" id="PS51154">
    <property type="entry name" value="MACRO"/>
    <property type="match status" value="1"/>
</dbReference>
<protein>
    <recommendedName>
        <fullName evidence="1">O-acetyl-ADP-ribose deacetylase</fullName>
        <ecNumber evidence="1">3.1.1.106</ecNumber>
    </recommendedName>
    <alternativeName>
        <fullName evidence="1">Regulator of RNase III activity</fullName>
    </alternativeName>
</protein>
<proteinExistence type="inferred from homology"/>
<reference key="1">
    <citation type="journal article" date="2011" name="J. Bacteriol.">
        <title>Complete genome sequence of Cronobacter turicensis LMG 23827, a food-borne pathogen causing deaths in neonates.</title>
        <authorList>
            <person name="Stephan R."/>
            <person name="Lehner A."/>
            <person name="Tischler P."/>
            <person name="Rattei T."/>
        </authorList>
    </citation>
    <scope>NUCLEOTIDE SEQUENCE [LARGE SCALE GENOMIC DNA]</scope>
    <source>
        <strain>DSM 18703 / CCUG 55852 / LMG 23827 / z3032</strain>
    </source>
</reference>
<feature type="chain" id="PRO_0000409474" description="O-acetyl-ADP-ribose deacetylase">
    <location>
        <begin position="1"/>
        <end position="176"/>
    </location>
</feature>
<feature type="domain" description="Macro" evidence="1">
    <location>
        <begin position="1"/>
        <end position="175"/>
    </location>
</feature>
<feature type="active site" description="Proton acceptor" evidence="1">
    <location>
        <position position="35"/>
    </location>
</feature>
<feature type="binding site" evidence="1">
    <location>
        <begin position="11"/>
        <end position="12"/>
    </location>
    <ligand>
        <name>substrate</name>
    </ligand>
</feature>
<feature type="binding site" evidence="1">
    <location>
        <position position="25"/>
    </location>
    <ligand>
        <name>substrate</name>
    </ligand>
</feature>
<feature type="binding site" evidence="1">
    <location>
        <begin position="33"/>
        <end position="35"/>
    </location>
    <ligand>
        <name>substrate</name>
    </ligand>
</feature>
<feature type="binding site" evidence="1">
    <location>
        <begin position="122"/>
        <end position="126"/>
    </location>
    <ligand>
        <name>substrate</name>
    </ligand>
</feature>
<evidence type="ECO:0000255" key="1">
    <source>
        <dbReference type="HAMAP-Rule" id="MF_01205"/>
    </source>
</evidence>
<accession>C9Y0V8</accession>
<name>YMDB_CROTZ</name>
<comment type="function">
    <text evidence="1">Deacetylates O-acetyl-ADP ribose to yield ADP-ribose and free acetate. Down-regulates ribonuclease 3 (RNase III) activity. Acts by interacting directly with the region of the ribonuclease that is required for dimerization/activation.</text>
</comment>
<comment type="catalytic activity">
    <reaction evidence="1">
        <text>3''-O-acetyl-ADP-D-ribose + H2O = ADP-D-ribose + acetate + H(+)</text>
        <dbReference type="Rhea" id="RHEA:59244"/>
        <dbReference type="ChEBI" id="CHEBI:15377"/>
        <dbReference type="ChEBI" id="CHEBI:15378"/>
        <dbReference type="ChEBI" id="CHEBI:30089"/>
        <dbReference type="ChEBI" id="CHEBI:57967"/>
        <dbReference type="ChEBI" id="CHEBI:142723"/>
        <dbReference type="EC" id="3.1.1.106"/>
    </reaction>
</comment>
<comment type="catalytic activity">
    <reaction evidence="1">
        <text>2''-O-acetyl-ADP-D-ribose + H2O = ADP-D-ribose + acetate + H(+)</text>
        <dbReference type="Rhea" id="RHEA:57060"/>
        <dbReference type="ChEBI" id="CHEBI:15377"/>
        <dbReference type="ChEBI" id="CHEBI:15378"/>
        <dbReference type="ChEBI" id="CHEBI:30089"/>
        <dbReference type="ChEBI" id="CHEBI:57967"/>
        <dbReference type="ChEBI" id="CHEBI:83767"/>
        <dbReference type="EC" id="3.1.1.106"/>
    </reaction>
</comment>
<comment type="subunit">
    <text evidence="1">Homodimer. Interacts with RNase III.</text>
</comment>
<comment type="similarity">
    <text evidence="1">Belongs to the MacroD-type family. YmdB subfamily.</text>
</comment>
<keyword id="KW-0378">Hydrolase</keyword>
<organism>
    <name type="scientific">Cronobacter turicensis (strain DSM 18703 / CCUG 55852 / LMG 23827 / z3032)</name>
    <dbReference type="NCBI Taxonomy" id="693216"/>
    <lineage>
        <taxon>Bacteria</taxon>
        <taxon>Pseudomonadati</taxon>
        <taxon>Pseudomonadota</taxon>
        <taxon>Gammaproteobacteria</taxon>
        <taxon>Enterobacterales</taxon>
        <taxon>Enterobacteriaceae</taxon>
        <taxon>Cronobacter</taxon>
    </lineage>
</organism>
<sequence length="176" mass="18892">MSGRINVVQGDITRIDTDVIVNAANPSLMGGGGVDGAIHRAAGPSLLAACKVVRQQQGECQPGHAVITEAGDLAAKAVIHTVGPIWRGGHDNEPQLLADAYRNSLELVTANGYNSVAFPAISTGIYGYPKAAAAQIAFETVSDYLTRRPQPKQVYFVCYDEENFLLYQRLLGQYDE</sequence>
<gene>
    <name evidence="1" type="primary">ymdB</name>
    <name type="ordered locus">Ctu_16240</name>
</gene>